<gene>
    <name evidence="1 11" type="primary">purN</name>
    <name type="ordered locus">b2500</name>
    <name type="ordered locus">JW2485</name>
</gene>
<proteinExistence type="evidence at protein level"/>
<organism>
    <name type="scientific">Escherichia coli (strain K12)</name>
    <dbReference type="NCBI Taxonomy" id="83333"/>
    <lineage>
        <taxon>Bacteria</taxon>
        <taxon>Pseudomonadati</taxon>
        <taxon>Pseudomonadota</taxon>
        <taxon>Gammaproteobacteria</taxon>
        <taxon>Enterobacterales</taxon>
        <taxon>Enterobacteriaceae</taxon>
        <taxon>Escherichia</taxon>
    </lineage>
</organism>
<reference key="1">
    <citation type="journal article" date="1987" name="J. Biol. Chem.">
        <title>Identification and nucleotide sequence of a gene encoding 5'-phosphoribosylglycinamide transformylase in Escherichia coli K12.</title>
        <authorList>
            <person name="Smith J.M."/>
            <person name="Daum H.A. III"/>
        </authorList>
    </citation>
    <scope>NUCLEOTIDE SEQUENCE [GENOMIC DNA]</scope>
    <source>
        <strain>K12</strain>
    </source>
</reference>
<reference key="2">
    <citation type="journal article" date="1997" name="DNA Res.">
        <title>Construction of a contiguous 874-kb sequence of the Escherichia coli-K12 genome corresponding to 50.0-68.8 min on the linkage map and analysis of its sequence features.</title>
        <authorList>
            <person name="Yamamoto Y."/>
            <person name="Aiba H."/>
            <person name="Baba T."/>
            <person name="Hayashi K."/>
            <person name="Inada T."/>
            <person name="Isono K."/>
            <person name="Itoh T."/>
            <person name="Kimura S."/>
            <person name="Kitagawa M."/>
            <person name="Makino K."/>
            <person name="Miki T."/>
            <person name="Mitsuhashi N."/>
            <person name="Mizobuchi K."/>
            <person name="Mori H."/>
            <person name="Nakade S."/>
            <person name="Nakamura Y."/>
            <person name="Nashimoto H."/>
            <person name="Oshima T."/>
            <person name="Oyama S."/>
            <person name="Saito N."/>
            <person name="Sampei G."/>
            <person name="Satoh Y."/>
            <person name="Sivasundaram S."/>
            <person name="Tagami H."/>
            <person name="Takahashi H."/>
            <person name="Takeda J."/>
            <person name="Takemoto K."/>
            <person name="Uehara K."/>
            <person name="Wada C."/>
            <person name="Yamagata S."/>
            <person name="Horiuchi T."/>
        </authorList>
    </citation>
    <scope>NUCLEOTIDE SEQUENCE [LARGE SCALE GENOMIC DNA]</scope>
    <source>
        <strain>K12 / W3110 / ATCC 27325 / DSM 5911</strain>
    </source>
</reference>
<reference key="3">
    <citation type="journal article" date="1997" name="Science">
        <title>The complete genome sequence of Escherichia coli K-12.</title>
        <authorList>
            <person name="Blattner F.R."/>
            <person name="Plunkett G. III"/>
            <person name="Bloch C.A."/>
            <person name="Perna N.T."/>
            <person name="Burland V."/>
            <person name="Riley M."/>
            <person name="Collado-Vides J."/>
            <person name="Glasner J.D."/>
            <person name="Rode C.K."/>
            <person name="Mayhew G.F."/>
            <person name="Gregor J."/>
            <person name="Davis N.W."/>
            <person name="Kirkpatrick H.A."/>
            <person name="Goeden M.A."/>
            <person name="Rose D.J."/>
            <person name="Mau B."/>
            <person name="Shao Y."/>
        </authorList>
    </citation>
    <scope>NUCLEOTIDE SEQUENCE [LARGE SCALE GENOMIC DNA]</scope>
    <source>
        <strain>K12 / MG1655 / ATCC 47076</strain>
    </source>
</reference>
<reference key="4">
    <citation type="journal article" date="2006" name="Mol. Syst. Biol.">
        <title>Highly accurate genome sequences of Escherichia coli K-12 strains MG1655 and W3110.</title>
        <authorList>
            <person name="Hayashi K."/>
            <person name="Morooka N."/>
            <person name="Yamamoto Y."/>
            <person name="Fujita K."/>
            <person name="Isono K."/>
            <person name="Choi S."/>
            <person name="Ohtsubo E."/>
            <person name="Baba T."/>
            <person name="Wanner B.L."/>
            <person name="Mori H."/>
            <person name="Horiuchi T."/>
        </authorList>
    </citation>
    <scope>NUCLEOTIDE SEQUENCE [LARGE SCALE GENOMIC DNA]</scope>
    <source>
        <strain>K12 / W3110 / ATCC 27325 / DSM 5911</strain>
    </source>
</reference>
<reference key="5">
    <citation type="journal article" date="2000" name="Proc. Natl. Acad. Sci. U.S.A.">
        <title>Multiple independent origins of Shigella clones of Escherichia coli and convergent evolution of many of their characteristics.</title>
        <authorList>
            <person name="Pupo G.M."/>
            <person name="Lan R."/>
            <person name="Reeves P.R."/>
        </authorList>
    </citation>
    <scope>NUCLEOTIDE SEQUENCE [GENOMIC DNA]</scope>
    <source>
        <strain>ECOR 7</strain>
    </source>
</reference>
<reference key="6">
    <citation type="journal article" date="1990" name="Biochemistry">
        <title>Subcloning, characterization, and affinity labeling of Escherichia coli glycinamide ribonucleotide transformylase.</title>
        <authorList>
            <person name="Inglese J."/>
            <person name="Johnson D.L."/>
            <person name="Shiau A."/>
            <person name="Smith J.M."/>
            <person name="Benkovic S.J."/>
        </authorList>
    </citation>
    <scope>PROTEIN SEQUENCE OF 1-6</scope>
    <scope>FUNCTION</scope>
    <scope>CATALYTIC ACTIVITY</scope>
    <scope>ACTIVITY REGULATION</scope>
    <scope>BIOPHYSICOCHEMICAL PROPERTIES</scope>
    <scope>SUBUNIT</scope>
</reference>
<reference key="7">
    <citation type="journal article" date="1978" name="J. Biol. Chem.">
        <title>N10-Formyltetrahydrofolate is the formyl donor for glycinamide ribotide transformylase in Escherichia coli.</title>
        <authorList>
            <person name="Dev I.K."/>
            <person name="Harvey R.J."/>
        </authorList>
    </citation>
    <scope>FUNCTION</scope>
    <scope>CATALYTIC ACTIVITY</scope>
</reference>
<reference key="8">
    <citation type="journal article" date="1990" name="Biochemistry">
        <title>Active-site mapping and site-specific mutagenesis of glycinamide ribonucleotide transformylase from Escherichia coli.</title>
        <authorList>
            <person name="Inglese J."/>
            <person name="Smith J.M."/>
            <person name="Benkovic S.J."/>
        </authorList>
    </citation>
    <scope>MUTAGENESIS OF ASP-144</scope>
    <scope>PARTIAL PROTEIN SEQUENCE</scope>
</reference>
<reference key="9">
    <citation type="journal article" date="1996" name="Biochemistry">
        <title>A rapid screen of active site mutants in glycinamide ribonucleotide transformylase.</title>
        <authorList>
            <person name="Warren M.S."/>
            <person name="Marolewski A.E."/>
            <person name="Benkovic S.J."/>
        </authorList>
    </citation>
    <scope>MUTAGENESIS OF ASN-106; HIS-108; HIS-119; SER-135; HIS-137 AND ASP-144</scope>
    <scope>PATHWAY</scope>
</reference>
<reference key="10">
    <citation type="journal article" date="1999" name="Biochemistry">
        <title>Catalytic mechanism of Escherichia coli glycinamide ribonucleotide transformylase probed by site-directed mutagenesis and pH-dependent studies.</title>
        <authorList>
            <person name="Shim J.H."/>
            <person name="Benkovic S.J."/>
        </authorList>
    </citation>
    <scope>MUTAGENESIS OF HIS-108; HIS-121 AND ASP-144</scope>
    <scope>ACTIVE SITE</scope>
</reference>
<reference key="11">
    <citation type="journal article" date="1992" name="J. Mol. Biol.">
        <title>Crystal structure of glycinamide ribonucleotide transformylase from Escherichia coli at 3.0-A resolution. A target enzyme for chemotherapy.</title>
        <authorList>
            <person name="Chen P."/>
            <person name="Schulze-Gahmen U."/>
            <person name="Stura E.A."/>
            <person name="Inglese J."/>
            <person name="Johnson D.L."/>
            <person name="Marolewski A."/>
            <person name="Benkovic S.J."/>
            <person name="Wilson I.A."/>
        </authorList>
    </citation>
    <scope>X-RAY CRYSTALLOGRAPHY (3.0 ANGSTROMS) IN COMPLEX WITH SUBSTRATE ANALOG</scope>
</reference>
<reference key="12">
    <citation type="journal article" date="1992" name="Proc. Natl. Acad. Sci. U.S.A.">
        <title>Structures of apo and complexed Escherichia coli glycinamide ribonucleotide transformylase.</title>
        <authorList>
            <person name="Almassy R.J."/>
            <person name="Janson C.A."/>
            <person name="Kan C.-C."/>
            <person name="Hostomska Z."/>
        </authorList>
    </citation>
    <scope>X-RAY CRYSTALLOGRAPHY (2.5 ANGSTROMS) IN COMPLEX WITH SUBSTRATE ANALOGS</scope>
</reference>
<reference key="13">
    <citation type="journal article" date="1998" name="J. Mol. Biol.">
        <title>A pH-dependent stabilization of an active site loop observed from low and high pH crystal structures of mutant monomeric glycinamide ribonucleotide transformylase at 1.8 to 1.9 A.</title>
        <authorList>
            <person name="Su Y."/>
            <person name="Yamashita M.M."/>
            <person name="Greasley S.E."/>
            <person name="Mullen C.A."/>
            <person name="Shim J.H."/>
            <person name="Jennings P.A."/>
            <person name="Benkovic S.J."/>
            <person name="Wilson I.A."/>
        </authorList>
    </citation>
    <scope>X-RAY CRYSTALLOGRAPHY (1.8 ANGSTROMS) OF MUTANT ALA-70 IN COMPLEX WITH SUBSTRATE ANALOGS</scope>
    <scope>SUBUNIT</scope>
</reference>
<reference key="14">
    <citation type="journal article" date="1999" name="Biochemistry">
        <title>New insights into inhibitor design from the crystal structure and NMR studies of Escherichia coli GAR transformylase in complex with beta-GAR and 10-formyl-5,8,10-trideazafolic acid.</title>
        <authorList>
            <person name="Greasley S.E."/>
            <person name="Yamashita M.M."/>
            <person name="Cai H."/>
            <person name="Benkovic S.J."/>
            <person name="Boger D.L."/>
            <person name="Wilson I.A."/>
        </authorList>
    </citation>
    <scope>X-RAY CRYSTALLOGRAPHY (2.1 ANGSTROMS) IN COMPLEX WITH SUBSTRATE ANALOGS</scope>
</reference>
<accession>P08179</accession>
<protein>
    <recommendedName>
        <fullName evidence="1">Phosphoribosylglycinamide formyltransferase</fullName>
        <ecNumber evidence="1 6 8">2.1.2.2</ecNumber>
    </recommendedName>
    <alternativeName>
        <fullName evidence="1">5'-phosphoribosylglycinamide transformylase</fullName>
    </alternativeName>
    <alternativeName>
        <fullName evidence="1">GAR transformylase</fullName>
        <shortName evidence="1">GART</shortName>
    </alternativeName>
</protein>
<comment type="function">
    <text evidence="1 6 8">Catalyzes the transfer of a formyl group from 10-formyltetrahydrofolate to 5-phospho-ribosyl-glycinamide (GAR), producing 5-phospho-ribosyl-N-formylglycinamide (FGAR) and tetrahydrofolate.</text>
</comment>
<comment type="catalytic activity">
    <reaction evidence="1 6 8">
        <text>N(1)-(5-phospho-beta-D-ribosyl)glycinamide + (6R)-10-formyltetrahydrofolate = N(2)-formyl-N(1)-(5-phospho-beta-D-ribosyl)glycinamide + (6S)-5,6,7,8-tetrahydrofolate + H(+)</text>
        <dbReference type="Rhea" id="RHEA:15053"/>
        <dbReference type="ChEBI" id="CHEBI:15378"/>
        <dbReference type="ChEBI" id="CHEBI:57453"/>
        <dbReference type="ChEBI" id="CHEBI:143788"/>
        <dbReference type="ChEBI" id="CHEBI:147286"/>
        <dbReference type="ChEBI" id="CHEBI:195366"/>
        <dbReference type="EC" id="2.1.2.2"/>
    </reaction>
</comment>
<comment type="activity regulation">
    <text evidence="6">Inhibited by N10-(bromoacetyl)-5,8-dideazafolate.</text>
</comment>
<comment type="biophysicochemical properties">
    <kinetics>
        <KM evidence="6">77.5 uM for (6R)-N10-formyltetrahydrofolate (at pH 8.5)</KM>
        <KM evidence="6">84.8 uM for (6R)-N10-formyltetrahydrofolate (at pH 7.5)</KM>
        <text evidence="6">kcat is 20.7 sec(-1) for (6R)-N10-formyltetrahydrofolate (at pH 8.5). kcat is 13.5 sec(-1) for (6R)-N10-formyltetrahydrofolate (at pH 7.5).</text>
    </kinetics>
    <phDependence>
        <text evidence="6">Optimum pH is 8.5.</text>
    </phDependence>
</comment>
<comment type="pathway">
    <text evidence="1 9">Purine metabolism; IMP biosynthesis via de novo pathway; N(2)-formyl-N(1)-(5-phospho-D-ribosyl)glycinamide from N(1)-(5-phospho-D-ribosyl)glycinamide (10-formyl THF route): step 1/1.</text>
</comment>
<comment type="subunit">
    <text evidence="3 4 5 6 10">Monomer. Homodimer below pH 6.8.</text>
</comment>
<comment type="similarity">
    <text evidence="1 12">Belongs to the GART family.</text>
</comment>
<dbReference type="EC" id="2.1.2.2" evidence="1 6 8"/>
<dbReference type="EMBL" id="M13747">
    <property type="protein sequence ID" value="AAA83899.1"/>
    <property type="molecule type" value="Genomic_DNA"/>
</dbReference>
<dbReference type="EMBL" id="U00096">
    <property type="protein sequence ID" value="AAC75553.1"/>
    <property type="molecule type" value="Genomic_DNA"/>
</dbReference>
<dbReference type="EMBL" id="AP009048">
    <property type="protein sequence ID" value="BAA16388.1"/>
    <property type="molecule type" value="Genomic_DNA"/>
</dbReference>
<dbReference type="EMBL" id="AF293167">
    <property type="protein sequence ID" value="AAG14584.1"/>
    <property type="molecule type" value="Genomic_DNA"/>
</dbReference>
<dbReference type="PIR" id="A28486">
    <property type="entry name" value="XYECGF"/>
</dbReference>
<dbReference type="RefSeq" id="NP_416995.1">
    <property type="nucleotide sequence ID" value="NC_000913.3"/>
</dbReference>
<dbReference type="RefSeq" id="WP_001028612.1">
    <property type="nucleotide sequence ID" value="NZ_LN832404.1"/>
</dbReference>
<dbReference type="PDB" id="1C2T">
    <property type="method" value="X-ray"/>
    <property type="resolution" value="2.10 A"/>
    <property type="chains" value="A/B=1-212"/>
</dbReference>
<dbReference type="PDB" id="1C3E">
    <property type="method" value="X-ray"/>
    <property type="resolution" value="2.10 A"/>
    <property type="chains" value="A/B=1-209"/>
</dbReference>
<dbReference type="PDB" id="1CDD">
    <property type="method" value="X-ray"/>
    <property type="resolution" value="2.80 A"/>
    <property type="chains" value="A/B=1-212"/>
</dbReference>
<dbReference type="PDB" id="1CDE">
    <property type="method" value="X-ray"/>
    <property type="resolution" value="2.50 A"/>
    <property type="chains" value="A/B/C/D=1-212"/>
</dbReference>
<dbReference type="PDB" id="1GAR">
    <property type="method" value="X-ray"/>
    <property type="resolution" value="1.96 A"/>
    <property type="chains" value="A/B=1-212"/>
</dbReference>
<dbReference type="PDB" id="1GRC">
    <property type="method" value="X-ray"/>
    <property type="resolution" value="3.00 A"/>
    <property type="chains" value="A/B=1-212"/>
</dbReference>
<dbReference type="PDB" id="1JKX">
    <property type="method" value="X-ray"/>
    <property type="resolution" value="1.60 A"/>
    <property type="chains" value="A/B/C/D=1-212"/>
</dbReference>
<dbReference type="PDB" id="2GAR">
    <property type="method" value="X-ray"/>
    <property type="resolution" value="1.80 A"/>
    <property type="chains" value="A=1-212"/>
</dbReference>
<dbReference type="PDB" id="3GAR">
    <property type="method" value="X-ray"/>
    <property type="resolution" value="1.90 A"/>
    <property type="chains" value="A=1-212"/>
</dbReference>
<dbReference type="PDBsum" id="1C2T"/>
<dbReference type="PDBsum" id="1C3E"/>
<dbReference type="PDBsum" id="1CDD"/>
<dbReference type="PDBsum" id="1CDE"/>
<dbReference type="PDBsum" id="1GAR"/>
<dbReference type="PDBsum" id="1GRC"/>
<dbReference type="PDBsum" id="1JKX"/>
<dbReference type="PDBsum" id="2GAR"/>
<dbReference type="PDBsum" id="3GAR"/>
<dbReference type="SMR" id="P08179"/>
<dbReference type="BioGRID" id="4261440">
    <property type="interactions" value="11"/>
</dbReference>
<dbReference type="BioGRID" id="851312">
    <property type="interactions" value="3"/>
</dbReference>
<dbReference type="FunCoup" id="P08179">
    <property type="interactions" value="839"/>
</dbReference>
<dbReference type="IntAct" id="P08179">
    <property type="interactions" value="1"/>
</dbReference>
<dbReference type="STRING" id="511145.b2500"/>
<dbReference type="BindingDB" id="P08179"/>
<dbReference type="DrugBank" id="DB04264">
    <property type="generic name" value="(10R)-10-formyl-5,8,10-trideazafolic acid"/>
</dbReference>
<dbReference type="DrugBank" id="DB02794">
    <property type="generic name" value="(2S)-2-({4-[(2S)-1-(2-Amino-4-oxo-1,4-dihydro-6-quinazolinyl)-3-{[2-({(2R,3R,4S,5R)-3,4-dihydroxy-5-[(phosphonooxy)methyl]tetrahydro-2-furanyl}amino)-2-oxoethyl]amino}-2-hydroxy-2-propanyl]benzoyl}ami no)pentanedioic acid"/>
</dbReference>
<dbReference type="DrugBank" id="DB02540">
    <property type="generic name" value="10-formyl-5,8,10-trideazafolic acid"/>
</dbReference>
<dbReference type="DrugBank" id="DB02236">
    <property type="generic name" value="Glycinamide Ribonucleotide"/>
</dbReference>
<dbReference type="jPOST" id="P08179"/>
<dbReference type="PaxDb" id="511145-b2500"/>
<dbReference type="EnsemblBacteria" id="AAC75553">
    <property type="protein sequence ID" value="AAC75553"/>
    <property type="gene ID" value="b2500"/>
</dbReference>
<dbReference type="GeneID" id="946973"/>
<dbReference type="KEGG" id="ecj:JW2485"/>
<dbReference type="KEGG" id="eco:b2500"/>
<dbReference type="KEGG" id="ecoc:C3026_13865"/>
<dbReference type="PATRIC" id="fig|1411691.4.peg.4238"/>
<dbReference type="EchoBASE" id="EB0792"/>
<dbReference type="eggNOG" id="COG0299">
    <property type="taxonomic scope" value="Bacteria"/>
</dbReference>
<dbReference type="HOGENOM" id="CLU_038395_1_1_6"/>
<dbReference type="InParanoid" id="P08179"/>
<dbReference type="OMA" id="HYVDEGM"/>
<dbReference type="OrthoDB" id="9806170at2"/>
<dbReference type="PhylomeDB" id="P08179"/>
<dbReference type="BioCyc" id="EcoCyc:GART-MONOMER"/>
<dbReference type="BioCyc" id="MetaCyc:GART-MONOMER"/>
<dbReference type="SABIO-RK" id="P08179"/>
<dbReference type="UniPathway" id="UPA00074">
    <property type="reaction ID" value="UER00126"/>
</dbReference>
<dbReference type="EvolutionaryTrace" id="P08179"/>
<dbReference type="PHI-base" id="PHI:8652"/>
<dbReference type="PRO" id="PR:P08179"/>
<dbReference type="Proteomes" id="UP000000625">
    <property type="component" value="Chromosome"/>
</dbReference>
<dbReference type="GO" id="GO:0005737">
    <property type="term" value="C:cytoplasm"/>
    <property type="evidence" value="ECO:0000318"/>
    <property type="project" value="GO_Central"/>
</dbReference>
<dbReference type="GO" id="GO:0005829">
    <property type="term" value="C:cytosol"/>
    <property type="evidence" value="ECO:0000314"/>
    <property type="project" value="EcoCyc"/>
</dbReference>
<dbReference type="GO" id="GO:0004644">
    <property type="term" value="F:phosphoribosylglycinamide formyltransferase activity"/>
    <property type="evidence" value="ECO:0000314"/>
    <property type="project" value="EcoCyc"/>
</dbReference>
<dbReference type="GO" id="GO:0006189">
    <property type="term" value="P:'de novo' IMP biosynthetic process"/>
    <property type="evidence" value="ECO:0000318"/>
    <property type="project" value="GO_Central"/>
</dbReference>
<dbReference type="GO" id="GO:0006974">
    <property type="term" value="P:DNA damage response"/>
    <property type="evidence" value="ECO:0000270"/>
    <property type="project" value="EcoliWiki"/>
</dbReference>
<dbReference type="CDD" id="cd08645">
    <property type="entry name" value="FMT_core_GART"/>
    <property type="match status" value="1"/>
</dbReference>
<dbReference type="DisProt" id="DP02740"/>
<dbReference type="FunFam" id="3.40.50.170:FF:000005">
    <property type="entry name" value="Phosphoribosylglycinamide formyltransferase"/>
    <property type="match status" value="1"/>
</dbReference>
<dbReference type="Gene3D" id="3.40.50.170">
    <property type="entry name" value="Formyl transferase, N-terminal domain"/>
    <property type="match status" value="1"/>
</dbReference>
<dbReference type="HAMAP" id="MF_01930">
    <property type="entry name" value="PurN"/>
    <property type="match status" value="1"/>
</dbReference>
<dbReference type="InterPro" id="IPR002376">
    <property type="entry name" value="Formyl_transf_N"/>
</dbReference>
<dbReference type="InterPro" id="IPR036477">
    <property type="entry name" value="Formyl_transf_N_sf"/>
</dbReference>
<dbReference type="InterPro" id="IPR004607">
    <property type="entry name" value="GART"/>
</dbReference>
<dbReference type="InterPro" id="IPR001555">
    <property type="entry name" value="GART_AS"/>
</dbReference>
<dbReference type="NCBIfam" id="TIGR00639">
    <property type="entry name" value="PurN"/>
    <property type="match status" value="1"/>
</dbReference>
<dbReference type="PANTHER" id="PTHR43369">
    <property type="entry name" value="PHOSPHORIBOSYLGLYCINAMIDE FORMYLTRANSFERASE"/>
    <property type="match status" value="1"/>
</dbReference>
<dbReference type="PANTHER" id="PTHR43369:SF2">
    <property type="entry name" value="PHOSPHORIBOSYLGLYCINAMIDE FORMYLTRANSFERASE"/>
    <property type="match status" value="1"/>
</dbReference>
<dbReference type="Pfam" id="PF00551">
    <property type="entry name" value="Formyl_trans_N"/>
    <property type="match status" value="1"/>
</dbReference>
<dbReference type="SUPFAM" id="SSF53328">
    <property type="entry name" value="Formyltransferase"/>
    <property type="match status" value="1"/>
</dbReference>
<dbReference type="PROSITE" id="PS00373">
    <property type="entry name" value="GART"/>
    <property type="match status" value="1"/>
</dbReference>
<feature type="chain" id="PRO_0000074943" description="Phosphoribosylglycinamide formyltransferase">
    <location>
        <begin position="1"/>
        <end position="212"/>
    </location>
</feature>
<feature type="active site" description="Proton donor" evidence="1 2">
    <location>
        <position position="108"/>
    </location>
</feature>
<feature type="binding site" evidence="1 3 5">
    <location>
        <begin position="11"/>
        <end position="13"/>
    </location>
    <ligand>
        <name>N(1)-(5-phospho-beta-D-ribosyl)glycinamide</name>
        <dbReference type="ChEBI" id="CHEBI:143788"/>
    </ligand>
</feature>
<feature type="binding site" evidence="1 3">
    <location>
        <position position="64"/>
    </location>
    <ligand>
        <name>(6R)-10-formyltetrahydrofolate</name>
        <dbReference type="ChEBI" id="CHEBI:195366"/>
    </ligand>
</feature>
<feature type="binding site" evidence="1 3 5">
    <location>
        <begin position="89"/>
        <end position="92"/>
    </location>
    <ligand>
        <name>(6R)-10-formyltetrahydrofolate</name>
        <dbReference type="ChEBI" id="CHEBI:195366"/>
    </ligand>
</feature>
<feature type="binding site" evidence="1 3">
    <location>
        <position position="106"/>
    </location>
    <ligand>
        <name>(6R)-10-formyltetrahydrofolate</name>
        <dbReference type="ChEBI" id="CHEBI:195366"/>
    </ligand>
</feature>
<feature type="binding site" evidence="3 5">
    <location>
        <begin position="140"/>
        <end position="144"/>
    </location>
    <ligand>
        <name>(6R)-10-formyltetrahydrofolate</name>
        <dbReference type="ChEBI" id="CHEBI:195366"/>
    </ligand>
</feature>
<feature type="binding site" evidence="3 5">
    <location>
        <begin position="170"/>
        <end position="173"/>
    </location>
    <ligand>
        <name>N(1)-(5-phospho-beta-D-ribosyl)glycinamide</name>
        <dbReference type="ChEBI" id="CHEBI:143788"/>
    </ligand>
</feature>
<feature type="site" description="Raises pKa of active site His" evidence="1 2">
    <location>
        <position position="144"/>
    </location>
</feature>
<feature type="mutagenesis site" description="Loss of homodimerization. No effect on activity." evidence="10">
    <original>E</original>
    <variation>A</variation>
    <location>
        <position position="70"/>
    </location>
</feature>
<feature type="mutagenesis site" description="Reduces activity about 2000-fold." evidence="9">
    <original>N</original>
    <variation>A</variation>
    <variation>D</variation>
    <variation>G</variation>
    <variation>S</variation>
    <location>
        <position position="106"/>
    </location>
</feature>
<feature type="mutagenesis site" description="Loss of activity." evidence="9">
    <original>N</original>
    <variation>E</variation>
    <variation>H</variation>
    <variation>I</variation>
    <variation>K</variation>
    <variation>L</variation>
    <variation>Y</variation>
    <location>
        <position position="106"/>
    </location>
</feature>
<feature type="mutagenesis site" description="Loss of activity." evidence="2 9">
    <original>H</original>
    <variation>A</variation>
    <variation>G</variation>
    <variation>M</variation>
    <variation>N</variation>
    <variation>Q</variation>
    <variation>R</variation>
    <location>
        <position position="108"/>
    </location>
</feature>
<feature type="mutagenesis site" description="Reduces activity about 1000-fold." evidence="9">
    <original>H</original>
    <variation>E</variation>
    <variation>S</variation>
    <variation>T</variation>
    <location>
        <position position="108"/>
    </location>
</feature>
<feature type="mutagenesis site" description="No effect." evidence="9">
    <original>H</original>
    <variation>A</variation>
    <location>
        <position position="119"/>
    </location>
</feature>
<feature type="mutagenesis site" description="Increases Km for 5'-phosphoribosylglycinamide 4-fold." evidence="2">
    <original>H</original>
    <variation>Q</variation>
    <location>
        <position position="121"/>
    </location>
</feature>
<feature type="mutagenesis site" description="Reduces activity about 1000-fold." evidence="9">
    <original>S</original>
    <variation>A</variation>
    <variation>L</variation>
    <location>
        <position position="135"/>
    </location>
</feature>
<feature type="mutagenesis site" description="No effect." evidence="9">
    <original>H</original>
    <variation>F</variation>
    <variation>Q</variation>
    <location>
        <position position="137"/>
    </location>
</feature>
<feature type="mutagenesis site" description="Reduces activity about 1000-fold." evidence="2 9">
    <original>D</original>
    <variation>A</variation>
    <variation>E</variation>
    <variation>S</variation>
    <variation>Y</variation>
    <location>
        <position position="144"/>
    </location>
</feature>
<feature type="mutagenesis site" description="Loss of activity." evidence="7 9">
    <original>D</original>
    <variation>C</variation>
    <variation>F</variation>
    <variation>H</variation>
    <variation>K</variation>
    <variation>L</variation>
    <variation>N</variation>
    <variation>P</variation>
    <variation>Q</variation>
    <variation>R</variation>
    <variation>T</variation>
    <variation>V</variation>
    <location>
        <position position="144"/>
    </location>
</feature>
<feature type="strand" evidence="13">
    <location>
        <begin position="2"/>
        <end position="9"/>
    </location>
</feature>
<feature type="helix" evidence="13">
    <location>
        <begin position="12"/>
        <end position="22"/>
    </location>
</feature>
<feature type="strand" evidence="13">
    <location>
        <begin position="25"/>
        <end position="36"/>
    </location>
</feature>
<feature type="helix" evidence="13">
    <location>
        <begin position="41"/>
        <end position="48"/>
    </location>
</feature>
<feature type="strand" evidence="13">
    <location>
        <begin position="52"/>
        <end position="55"/>
    </location>
</feature>
<feature type="helix" evidence="13">
    <location>
        <begin position="58"/>
        <end position="60"/>
    </location>
</feature>
<feature type="strand" evidence="14">
    <location>
        <begin position="61"/>
        <end position="63"/>
    </location>
</feature>
<feature type="helix" evidence="13">
    <location>
        <begin position="64"/>
        <end position="75"/>
    </location>
</feature>
<feature type="helix" evidence="13">
    <location>
        <begin position="76"/>
        <end position="78"/>
    </location>
</feature>
<feature type="strand" evidence="13">
    <location>
        <begin position="81"/>
        <end position="87"/>
    </location>
</feature>
<feature type="helix" evidence="13">
    <location>
        <begin position="94"/>
        <end position="99"/>
    </location>
</feature>
<feature type="turn" evidence="13">
    <location>
        <begin position="100"/>
        <end position="102"/>
    </location>
</feature>
<feature type="strand" evidence="13">
    <location>
        <begin position="103"/>
        <end position="110"/>
    </location>
</feature>
<feature type="strand" evidence="15">
    <location>
        <begin position="112"/>
        <end position="114"/>
    </location>
</feature>
<feature type="helix" evidence="13">
    <location>
        <begin position="120"/>
        <end position="126"/>
    </location>
</feature>
<feature type="strand" evidence="13">
    <location>
        <begin position="130"/>
        <end position="138"/>
    </location>
</feature>
<feature type="strand" evidence="15">
    <location>
        <begin position="141"/>
        <end position="146"/>
    </location>
</feature>
<feature type="strand" evidence="13">
    <location>
        <begin position="148"/>
        <end position="155"/>
    </location>
</feature>
<feature type="helix" evidence="13">
    <location>
        <begin position="162"/>
        <end position="185"/>
    </location>
</feature>
<feature type="strand" evidence="13">
    <location>
        <begin position="189"/>
        <end position="192"/>
    </location>
</feature>
<feature type="strand" evidence="13">
    <location>
        <begin position="195"/>
        <end position="198"/>
    </location>
</feature>
<name>PUR3_ECOLI</name>
<keyword id="KW-0002">3D-structure</keyword>
<keyword id="KW-0903">Direct protein sequencing</keyword>
<keyword id="KW-0658">Purine biosynthesis</keyword>
<keyword id="KW-1185">Reference proteome</keyword>
<keyword id="KW-0808">Transferase</keyword>
<evidence type="ECO:0000255" key="1">
    <source>
        <dbReference type="HAMAP-Rule" id="MF_01930"/>
    </source>
</evidence>
<evidence type="ECO:0000269" key="2">
    <source>
    </source>
</evidence>
<evidence type="ECO:0000269" key="3">
    <source>
    </source>
</evidence>
<evidence type="ECO:0000269" key="4">
    <source>
    </source>
</evidence>
<evidence type="ECO:0000269" key="5">
    <source>
    </source>
</evidence>
<evidence type="ECO:0000269" key="6">
    <source>
    </source>
</evidence>
<evidence type="ECO:0000269" key="7">
    <source>
    </source>
</evidence>
<evidence type="ECO:0000269" key="8">
    <source>
    </source>
</evidence>
<evidence type="ECO:0000269" key="9">
    <source>
    </source>
</evidence>
<evidence type="ECO:0000269" key="10">
    <source>
    </source>
</evidence>
<evidence type="ECO:0000303" key="11">
    <source>
    </source>
</evidence>
<evidence type="ECO:0000305" key="12"/>
<evidence type="ECO:0007829" key="13">
    <source>
        <dbReference type="PDB" id="1JKX"/>
    </source>
</evidence>
<evidence type="ECO:0007829" key="14">
    <source>
        <dbReference type="PDB" id="2GAR"/>
    </source>
</evidence>
<evidence type="ECO:0007829" key="15">
    <source>
        <dbReference type="PDB" id="3GAR"/>
    </source>
</evidence>
<sequence>MNIVVLISGNGSNLQAIIDACKTNKIKGTVRAVFSNKADAFGLERARQAGIATHTLIASAFDSREAYDRELIHEIDMYAPDVVVLAGFMRILSPAFVSHYAGRLLNIHPSLLPKYPGLHTHRQALENGDEEHGTSVHFVTDELDGGPVILQAKVPVFAGDSEDDITARVQTQEHAIYPLVISWFADGRLKMHENAAWLDGQRLPPQGYAADE</sequence>